<reference key="1">
    <citation type="journal article" date="2000" name="Anal. Biochem.">
        <title>A method for the large-scale cloning of nuclear proteins and nuclear targeting sequences on a functional basis.</title>
        <authorList>
            <person name="Pichon B."/>
            <person name="Mercan D."/>
            <person name="Pouillon V."/>
            <person name="Christophe-Hobertus C."/>
            <person name="Christophe D."/>
        </authorList>
    </citation>
    <scope>NUCLEOTIDE SEQUENCE [LARGE SCALE MRNA]</scope>
    <source>
        <tissue>Thyroid</tissue>
    </source>
</reference>
<dbReference type="EMBL" id="AJ388521">
    <property type="protein sequence ID" value="CAB46823.1"/>
    <property type="molecule type" value="mRNA"/>
</dbReference>
<dbReference type="BioGRID" id="139607">
    <property type="interactions" value="1"/>
</dbReference>
<dbReference type="FunCoup" id="Q9XSU3">
    <property type="interactions" value="2190"/>
</dbReference>
<dbReference type="STRING" id="9615.ENSCAFP00000024349"/>
<dbReference type="PaxDb" id="9612-ENSCAFP00000024349"/>
<dbReference type="eggNOG" id="KOG0901">
    <property type="taxonomic scope" value="Eukaryota"/>
</dbReference>
<dbReference type="InParanoid" id="Q9XSU3"/>
<dbReference type="OrthoDB" id="407959at2759"/>
<dbReference type="Proteomes" id="UP000002254">
    <property type="component" value="Unplaced"/>
</dbReference>
<dbReference type="Proteomes" id="UP000694429">
    <property type="component" value="Unplaced"/>
</dbReference>
<dbReference type="Proteomes" id="UP000694542">
    <property type="component" value="Unplaced"/>
</dbReference>
<dbReference type="Proteomes" id="UP000805418">
    <property type="component" value="Unplaced"/>
</dbReference>
<dbReference type="GO" id="GO:0022625">
    <property type="term" value="C:cytosolic large ribosomal subunit"/>
    <property type="evidence" value="ECO:0000318"/>
    <property type="project" value="GO_Central"/>
</dbReference>
<dbReference type="GO" id="GO:0070180">
    <property type="term" value="F:large ribosomal subunit rRNA binding"/>
    <property type="evidence" value="ECO:0000318"/>
    <property type="project" value="GO_Central"/>
</dbReference>
<dbReference type="GO" id="GO:0003735">
    <property type="term" value="F:structural constituent of ribosome"/>
    <property type="evidence" value="ECO:0000318"/>
    <property type="project" value="GO_Central"/>
</dbReference>
<dbReference type="GO" id="GO:0006412">
    <property type="term" value="P:translation"/>
    <property type="evidence" value="ECO:0007669"/>
    <property type="project" value="InterPro"/>
</dbReference>
<dbReference type="CDD" id="cd00337">
    <property type="entry name" value="Ribosomal_uL14"/>
    <property type="match status" value="1"/>
</dbReference>
<dbReference type="FunFam" id="2.40.150.20:FF:000003">
    <property type="entry name" value="60S ribosomal protein L23"/>
    <property type="match status" value="1"/>
</dbReference>
<dbReference type="Gene3D" id="2.40.150.20">
    <property type="entry name" value="Ribosomal protein L14"/>
    <property type="match status" value="1"/>
</dbReference>
<dbReference type="HAMAP" id="MF_01367">
    <property type="entry name" value="Ribosomal_uL14"/>
    <property type="match status" value="1"/>
</dbReference>
<dbReference type="InterPro" id="IPR000218">
    <property type="entry name" value="Ribosomal_uL14"/>
</dbReference>
<dbReference type="InterPro" id="IPR019972">
    <property type="entry name" value="Ribosomal_uL14_CS"/>
</dbReference>
<dbReference type="InterPro" id="IPR036853">
    <property type="entry name" value="Ribosomal_uL14_sf"/>
</dbReference>
<dbReference type="NCBIfam" id="NF006344">
    <property type="entry name" value="PRK08571.1"/>
    <property type="match status" value="1"/>
</dbReference>
<dbReference type="PANTHER" id="PTHR11761">
    <property type="entry name" value="50S/60S RIBOSOMAL PROTEIN L14/L23"/>
    <property type="match status" value="1"/>
</dbReference>
<dbReference type="PANTHER" id="PTHR11761:SF8">
    <property type="entry name" value="LARGE RIBOSOMAL SUBUNIT PROTEIN UL14"/>
    <property type="match status" value="1"/>
</dbReference>
<dbReference type="Pfam" id="PF00238">
    <property type="entry name" value="Ribosomal_L14"/>
    <property type="match status" value="1"/>
</dbReference>
<dbReference type="SMART" id="SM01374">
    <property type="entry name" value="Ribosomal_L14"/>
    <property type="match status" value="1"/>
</dbReference>
<dbReference type="SUPFAM" id="SSF50193">
    <property type="entry name" value="Ribosomal protein L14"/>
    <property type="match status" value="1"/>
</dbReference>
<dbReference type="PROSITE" id="PS00049">
    <property type="entry name" value="RIBOSOMAL_L14"/>
    <property type="match status" value="1"/>
</dbReference>
<evidence type="ECO:0000250" key="1">
    <source>
        <dbReference type="UniProtKB" id="P62829"/>
    </source>
</evidence>
<evidence type="ECO:0000305" key="2"/>
<comment type="function">
    <text evidence="1">Component of the large ribosomal subunit. The ribosome is a large ribonucleoprotein complex responsible for the synthesis of proteins in the cell.</text>
</comment>
<comment type="subunit">
    <text evidence="1">Component of the large ribosomal subunit.</text>
</comment>
<comment type="subcellular location">
    <subcellularLocation>
        <location evidence="1">Cytoplasm</location>
    </subcellularLocation>
</comment>
<comment type="similarity">
    <text evidence="2">Belongs to the universal ribosomal protein uL14 family.</text>
</comment>
<proteinExistence type="evidence at transcript level"/>
<gene>
    <name type="primary">RPL23</name>
    <name type="ORF">V2.86</name>
</gene>
<keyword id="KW-0963">Cytoplasm</keyword>
<keyword id="KW-0597">Phosphoprotein</keyword>
<keyword id="KW-1185">Reference proteome</keyword>
<keyword id="KW-0687">Ribonucleoprotein</keyword>
<keyword id="KW-0689">Ribosomal protein</keyword>
<name>RL23_CANLF</name>
<organism>
    <name type="scientific">Canis lupus familiaris</name>
    <name type="common">Dog</name>
    <name type="synonym">Canis familiaris</name>
    <dbReference type="NCBI Taxonomy" id="9615"/>
    <lineage>
        <taxon>Eukaryota</taxon>
        <taxon>Metazoa</taxon>
        <taxon>Chordata</taxon>
        <taxon>Craniata</taxon>
        <taxon>Vertebrata</taxon>
        <taxon>Euteleostomi</taxon>
        <taxon>Mammalia</taxon>
        <taxon>Eutheria</taxon>
        <taxon>Laurasiatheria</taxon>
        <taxon>Carnivora</taxon>
        <taxon>Caniformia</taxon>
        <taxon>Canidae</taxon>
        <taxon>Canis</taxon>
    </lineage>
</organism>
<sequence>MSKRGRGGSSGAKFRISLGLPVGAVINCADNTGAKNLYIISVKGIKGRLNRLPAAGVGDMVMATVKKGKPXLRKKVHPAVVIRQRKSYRRKDGVFLYFEDNAGVIVNNKGEMKGSAITGPVXKECADLWPXIASNAGSIA</sequence>
<protein>
    <recommendedName>
        <fullName evidence="2">Large ribosomal subunit protein uL14</fullName>
    </recommendedName>
    <alternativeName>
        <fullName>60S ribosomal protein L23</fullName>
    </alternativeName>
</protein>
<feature type="chain" id="PRO_0000128611" description="Large ribosomal subunit protein uL14">
    <location>
        <begin position="1"/>
        <end position="140"/>
    </location>
</feature>
<feature type="modified residue" description="Phosphoserine" evidence="1">
    <location>
        <position position="17"/>
    </location>
</feature>
<feature type="modified residue" description="Phosphotyrosine" evidence="1">
    <location>
        <position position="38"/>
    </location>
</feature>
<accession>Q9XSU3</accession>